<evidence type="ECO:0000255" key="1">
    <source>
        <dbReference type="HAMAP-Rule" id="MF_00009"/>
    </source>
</evidence>
<evidence type="ECO:0000256" key="2">
    <source>
        <dbReference type="SAM" id="MobiDB-lite"/>
    </source>
</evidence>
<evidence type="ECO:0000269" key="3">
    <source>
    </source>
</evidence>
<reference key="1">
    <citation type="submission" date="2006-10" db="EMBL/GenBank/DDBJ databases">
        <authorList>
            <person name="Fleischmann R.D."/>
            <person name="Dodson R.J."/>
            <person name="Haft D.H."/>
            <person name="Merkel J.S."/>
            <person name="Nelson W.C."/>
            <person name="Fraser C.M."/>
        </authorList>
    </citation>
    <scope>NUCLEOTIDE SEQUENCE [LARGE SCALE GENOMIC DNA]</scope>
    <source>
        <strain>ATCC 700084 / mc(2)155</strain>
    </source>
</reference>
<reference key="2">
    <citation type="journal article" date="2007" name="Genome Biol.">
        <title>Interrupted coding sequences in Mycobacterium smegmatis: authentic mutations or sequencing errors?</title>
        <authorList>
            <person name="Deshayes C."/>
            <person name="Perrodou E."/>
            <person name="Gallien S."/>
            <person name="Euphrasie D."/>
            <person name="Schaeffer C."/>
            <person name="Van-Dorsselaer A."/>
            <person name="Poch O."/>
            <person name="Lecompte O."/>
            <person name="Reyrat J.-M."/>
        </authorList>
    </citation>
    <scope>NUCLEOTIDE SEQUENCE [LARGE SCALE GENOMIC DNA]</scope>
    <source>
        <strain>ATCC 700084 / mc(2)155</strain>
    </source>
</reference>
<reference key="3">
    <citation type="journal article" date="2009" name="Genome Res.">
        <title>Ortho-proteogenomics: multiple proteomes investigation through orthology and a new MS-based protocol.</title>
        <authorList>
            <person name="Gallien S."/>
            <person name="Perrodou E."/>
            <person name="Carapito C."/>
            <person name="Deshayes C."/>
            <person name="Reyrat J.-M."/>
            <person name="Van Dorsselaer A."/>
            <person name="Poch O."/>
            <person name="Schaeffer C."/>
            <person name="Lecompte O."/>
        </authorList>
    </citation>
    <scope>NUCLEOTIDE SEQUENCE [LARGE SCALE GENOMIC DNA]</scope>
    <scope>IDENTIFICATION BY MASS SPECTROMETRY [LARGE SCALE ANALYSIS]</scope>
    <scope>CLEAVAGE OF INITIATOR METHIONINE</scope>
    <source>
        <strain>ATCC 700084 / mc(2)155</strain>
    </source>
</reference>
<protein>
    <recommendedName>
        <fullName evidence="1">Endoribonuclease YbeY</fullName>
        <ecNumber evidence="1">3.1.-.-</ecNumber>
    </recommendedName>
</protein>
<proteinExistence type="evidence at protein level"/>
<gene>
    <name evidence="1" type="primary">ybeY</name>
    <name type="ordered locus">MSMEG_4496</name>
    <name type="ordered locus">MSMEI_4385</name>
</gene>
<organism>
    <name type="scientific">Mycolicibacterium smegmatis (strain ATCC 700084 / mc(2)155)</name>
    <name type="common">Mycobacterium smegmatis</name>
    <dbReference type="NCBI Taxonomy" id="246196"/>
    <lineage>
        <taxon>Bacteria</taxon>
        <taxon>Bacillati</taxon>
        <taxon>Actinomycetota</taxon>
        <taxon>Actinomycetes</taxon>
        <taxon>Mycobacteriales</taxon>
        <taxon>Mycobacteriaceae</taxon>
        <taxon>Mycolicibacterium</taxon>
    </lineage>
</organism>
<feature type="initiator methionine" description="Removed" evidence="3">
    <location>
        <position position="1"/>
    </location>
</feature>
<feature type="chain" id="PRO_1000000728" description="Endoribonuclease YbeY">
    <location>
        <begin position="2"/>
        <end position="178"/>
    </location>
</feature>
<feature type="region of interest" description="Disordered" evidence="2">
    <location>
        <begin position="158"/>
        <end position="178"/>
    </location>
</feature>
<feature type="binding site" evidence="1">
    <location>
        <position position="118"/>
    </location>
    <ligand>
        <name>Zn(2+)</name>
        <dbReference type="ChEBI" id="CHEBI:29105"/>
        <note>catalytic</note>
    </ligand>
</feature>
<feature type="binding site" evidence="1">
    <location>
        <position position="122"/>
    </location>
    <ligand>
        <name>Zn(2+)</name>
        <dbReference type="ChEBI" id="CHEBI:29105"/>
        <note>catalytic</note>
    </ligand>
</feature>
<feature type="binding site" evidence="1">
    <location>
        <position position="128"/>
    </location>
    <ligand>
        <name>Zn(2+)</name>
        <dbReference type="ChEBI" id="CHEBI:29105"/>
        <note>catalytic</note>
    </ligand>
</feature>
<dbReference type="EC" id="3.1.-.-" evidence="1"/>
<dbReference type="EMBL" id="CP000480">
    <property type="protein sequence ID" value="ABK69739.1"/>
    <property type="molecule type" value="Genomic_DNA"/>
</dbReference>
<dbReference type="EMBL" id="CP001663">
    <property type="protein sequence ID" value="AFP40839.1"/>
    <property type="molecule type" value="Genomic_DNA"/>
</dbReference>
<dbReference type="RefSeq" id="WP_003895867.1">
    <property type="nucleotide sequence ID" value="NZ_SIJM01000026.1"/>
</dbReference>
<dbReference type="RefSeq" id="YP_888768.1">
    <property type="nucleotide sequence ID" value="NC_008596.1"/>
</dbReference>
<dbReference type="SMR" id="A0R0T0"/>
<dbReference type="STRING" id="246196.MSMEG_4496"/>
<dbReference type="PaxDb" id="246196-MSMEI_4385"/>
<dbReference type="GeneID" id="93459199"/>
<dbReference type="KEGG" id="msb:LJ00_22245"/>
<dbReference type="KEGG" id="msg:MSMEI_4385"/>
<dbReference type="KEGG" id="msm:MSMEG_4496"/>
<dbReference type="PATRIC" id="fig|246196.19.peg.4402"/>
<dbReference type="eggNOG" id="COG0319">
    <property type="taxonomic scope" value="Bacteria"/>
</dbReference>
<dbReference type="OrthoDB" id="9807740at2"/>
<dbReference type="Proteomes" id="UP000000757">
    <property type="component" value="Chromosome"/>
</dbReference>
<dbReference type="Proteomes" id="UP000006158">
    <property type="component" value="Chromosome"/>
</dbReference>
<dbReference type="GO" id="GO:0005737">
    <property type="term" value="C:cytoplasm"/>
    <property type="evidence" value="ECO:0007669"/>
    <property type="project" value="UniProtKB-SubCell"/>
</dbReference>
<dbReference type="GO" id="GO:0004222">
    <property type="term" value="F:metalloendopeptidase activity"/>
    <property type="evidence" value="ECO:0007669"/>
    <property type="project" value="InterPro"/>
</dbReference>
<dbReference type="GO" id="GO:0004521">
    <property type="term" value="F:RNA endonuclease activity"/>
    <property type="evidence" value="ECO:0007669"/>
    <property type="project" value="UniProtKB-UniRule"/>
</dbReference>
<dbReference type="GO" id="GO:0008270">
    <property type="term" value="F:zinc ion binding"/>
    <property type="evidence" value="ECO:0007669"/>
    <property type="project" value="UniProtKB-UniRule"/>
</dbReference>
<dbReference type="GO" id="GO:0006364">
    <property type="term" value="P:rRNA processing"/>
    <property type="evidence" value="ECO:0007669"/>
    <property type="project" value="UniProtKB-UniRule"/>
</dbReference>
<dbReference type="Gene3D" id="3.40.390.30">
    <property type="entry name" value="Metalloproteases ('zincins'), catalytic domain"/>
    <property type="match status" value="1"/>
</dbReference>
<dbReference type="HAMAP" id="MF_00009">
    <property type="entry name" value="Endoribonucl_YbeY"/>
    <property type="match status" value="1"/>
</dbReference>
<dbReference type="InterPro" id="IPR023091">
    <property type="entry name" value="MetalPrtase_cat_dom_sf_prd"/>
</dbReference>
<dbReference type="InterPro" id="IPR002036">
    <property type="entry name" value="YbeY"/>
</dbReference>
<dbReference type="InterPro" id="IPR020549">
    <property type="entry name" value="YbeY_CS"/>
</dbReference>
<dbReference type="NCBIfam" id="TIGR00043">
    <property type="entry name" value="rRNA maturation RNase YbeY"/>
    <property type="match status" value="1"/>
</dbReference>
<dbReference type="PANTHER" id="PTHR46986">
    <property type="entry name" value="ENDORIBONUCLEASE YBEY, CHLOROPLASTIC"/>
    <property type="match status" value="1"/>
</dbReference>
<dbReference type="PANTHER" id="PTHR46986:SF1">
    <property type="entry name" value="ENDORIBONUCLEASE YBEY, CHLOROPLASTIC"/>
    <property type="match status" value="1"/>
</dbReference>
<dbReference type="Pfam" id="PF02130">
    <property type="entry name" value="YbeY"/>
    <property type="match status" value="1"/>
</dbReference>
<dbReference type="SUPFAM" id="SSF55486">
    <property type="entry name" value="Metalloproteases ('zincins'), catalytic domain"/>
    <property type="match status" value="1"/>
</dbReference>
<dbReference type="PROSITE" id="PS01306">
    <property type="entry name" value="UPF0054"/>
    <property type="match status" value="1"/>
</dbReference>
<name>YBEY_MYCS2</name>
<sequence length="178" mass="19908">MSIEVSNESGYDVSEPELISVARFVIEKMDVHPAAELSMVLLDSAAMADLHMRWMDLPGPTDVMSFPMDELEPGGRPDAPEPGPAMLGDIVLCPEFAEQQAAKAGHSLGHELALLTVHGVLHLLGYDHAEPDEEKEMFALQRQLLEEWVADQVEAYHADRQSEKDRRLLDKSRYFDEP</sequence>
<comment type="function">
    <text evidence="1">Single strand-specific metallo-endoribonuclease involved in late-stage 70S ribosome quality control and in maturation of the 3' terminus of the 16S rRNA.</text>
</comment>
<comment type="cofactor">
    <cofactor evidence="1">
        <name>Zn(2+)</name>
        <dbReference type="ChEBI" id="CHEBI:29105"/>
    </cofactor>
    <text evidence="1">Binds 1 zinc ion.</text>
</comment>
<comment type="subcellular location">
    <subcellularLocation>
        <location evidence="1">Cytoplasm</location>
    </subcellularLocation>
</comment>
<comment type="similarity">
    <text evidence="1">Belongs to the endoribonuclease YbeY family.</text>
</comment>
<keyword id="KW-0963">Cytoplasm</keyword>
<keyword id="KW-0255">Endonuclease</keyword>
<keyword id="KW-0378">Hydrolase</keyword>
<keyword id="KW-0479">Metal-binding</keyword>
<keyword id="KW-0540">Nuclease</keyword>
<keyword id="KW-1185">Reference proteome</keyword>
<keyword id="KW-0690">Ribosome biogenesis</keyword>
<keyword id="KW-0698">rRNA processing</keyword>
<keyword id="KW-0862">Zinc</keyword>
<accession>A0R0T0</accession>
<accession>I7GDK6</accession>